<proteinExistence type="inferred from homology"/>
<dbReference type="EMBL" id="CP000805">
    <property type="protein sequence ID" value="ACD70430.1"/>
    <property type="molecule type" value="Genomic_DNA"/>
</dbReference>
<dbReference type="RefSeq" id="WP_010881451.1">
    <property type="nucleotide sequence ID" value="NC_021508.1"/>
</dbReference>
<dbReference type="SMR" id="B2S1V1"/>
<dbReference type="GeneID" id="93875801"/>
<dbReference type="KEGG" id="tpp:TPASS_0001"/>
<dbReference type="PATRIC" id="fig|455434.6.peg.1"/>
<dbReference type="Proteomes" id="UP000001202">
    <property type="component" value="Chromosome"/>
</dbReference>
<dbReference type="GO" id="GO:0005737">
    <property type="term" value="C:cytoplasm"/>
    <property type="evidence" value="ECO:0007669"/>
    <property type="project" value="UniProtKB-SubCell"/>
</dbReference>
<dbReference type="GO" id="GO:0005886">
    <property type="term" value="C:plasma membrane"/>
    <property type="evidence" value="ECO:0007669"/>
    <property type="project" value="TreeGrafter"/>
</dbReference>
<dbReference type="GO" id="GO:0005524">
    <property type="term" value="F:ATP binding"/>
    <property type="evidence" value="ECO:0007669"/>
    <property type="project" value="UniProtKB-UniRule"/>
</dbReference>
<dbReference type="GO" id="GO:0016887">
    <property type="term" value="F:ATP hydrolysis activity"/>
    <property type="evidence" value="ECO:0007669"/>
    <property type="project" value="InterPro"/>
</dbReference>
<dbReference type="GO" id="GO:0003688">
    <property type="term" value="F:DNA replication origin binding"/>
    <property type="evidence" value="ECO:0007669"/>
    <property type="project" value="UniProtKB-UniRule"/>
</dbReference>
<dbReference type="GO" id="GO:0008289">
    <property type="term" value="F:lipid binding"/>
    <property type="evidence" value="ECO:0007669"/>
    <property type="project" value="UniProtKB-KW"/>
</dbReference>
<dbReference type="GO" id="GO:0006270">
    <property type="term" value="P:DNA replication initiation"/>
    <property type="evidence" value="ECO:0007669"/>
    <property type="project" value="UniProtKB-UniRule"/>
</dbReference>
<dbReference type="GO" id="GO:0006275">
    <property type="term" value="P:regulation of DNA replication"/>
    <property type="evidence" value="ECO:0007669"/>
    <property type="project" value="UniProtKB-UniRule"/>
</dbReference>
<dbReference type="CDD" id="cd00009">
    <property type="entry name" value="AAA"/>
    <property type="match status" value="1"/>
</dbReference>
<dbReference type="CDD" id="cd06571">
    <property type="entry name" value="Bac_DnaA_C"/>
    <property type="match status" value="1"/>
</dbReference>
<dbReference type="Gene3D" id="1.10.1750.10">
    <property type="match status" value="1"/>
</dbReference>
<dbReference type="Gene3D" id="1.10.8.60">
    <property type="match status" value="1"/>
</dbReference>
<dbReference type="Gene3D" id="3.30.300.180">
    <property type="match status" value="1"/>
</dbReference>
<dbReference type="Gene3D" id="3.40.50.300">
    <property type="entry name" value="P-loop containing nucleotide triphosphate hydrolases"/>
    <property type="match status" value="1"/>
</dbReference>
<dbReference type="HAMAP" id="MF_00377">
    <property type="entry name" value="DnaA_bact"/>
    <property type="match status" value="1"/>
</dbReference>
<dbReference type="InterPro" id="IPR003593">
    <property type="entry name" value="AAA+_ATPase"/>
</dbReference>
<dbReference type="InterPro" id="IPR001957">
    <property type="entry name" value="Chromosome_initiator_DnaA"/>
</dbReference>
<dbReference type="InterPro" id="IPR020591">
    <property type="entry name" value="Chromosome_initiator_DnaA-like"/>
</dbReference>
<dbReference type="InterPro" id="IPR018312">
    <property type="entry name" value="Chromosome_initiator_DnaA_CS"/>
</dbReference>
<dbReference type="InterPro" id="IPR013159">
    <property type="entry name" value="DnaA_C"/>
</dbReference>
<dbReference type="InterPro" id="IPR013317">
    <property type="entry name" value="DnaA_dom"/>
</dbReference>
<dbReference type="InterPro" id="IPR024633">
    <property type="entry name" value="DnaA_N_dom"/>
</dbReference>
<dbReference type="InterPro" id="IPR038454">
    <property type="entry name" value="DnaA_N_sf"/>
</dbReference>
<dbReference type="InterPro" id="IPR027417">
    <property type="entry name" value="P-loop_NTPase"/>
</dbReference>
<dbReference type="InterPro" id="IPR010921">
    <property type="entry name" value="Trp_repressor/repl_initiator"/>
</dbReference>
<dbReference type="NCBIfam" id="TIGR00362">
    <property type="entry name" value="DnaA"/>
    <property type="match status" value="1"/>
</dbReference>
<dbReference type="PANTHER" id="PTHR30050">
    <property type="entry name" value="CHROMOSOMAL REPLICATION INITIATOR PROTEIN DNAA"/>
    <property type="match status" value="1"/>
</dbReference>
<dbReference type="PANTHER" id="PTHR30050:SF2">
    <property type="entry name" value="CHROMOSOMAL REPLICATION INITIATOR PROTEIN DNAA"/>
    <property type="match status" value="1"/>
</dbReference>
<dbReference type="Pfam" id="PF00308">
    <property type="entry name" value="Bac_DnaA"/>
    <property type="match status" value="1"/>
</dbReference>
<dbReference type="Pfam" id="PF08299">
    <property type="entry name" value="Bac_DnaA_C"/>
    <property type="match status" value="1"/>
</dbReference>
<dbReference type="Pfam" id="PF11638">
    <property type="entry name" value="DnaA_N"/>
    <property type="match status" value="1"/>
</dbReference>
<dbReference type="PRINTS" id="PR00051">
    <property type="entry name" value="DNAA"/>
</dbReference>
<dbReference type="SMART" id="SM00382">
    <property type="entry name" value="AAA"/>
    <property type="match status" value="1"/>
</dbReference>
<dbReference type="SMART" id="SM00760">
    <property type="entry name" value="Bac_DnaA_C"/>
    <property type="match status" value="1"/>
</dbReference>
<dbReference type="SUPFAM" id="SSF52540">
    <property type="entry name" value="P-loop containing nucleoside triphosphate hydrolases"/>
    <property type="match status" value="1"/>
</dbReference>
<dbReference type="SUPFAM" id="SSF48295">
    <property type="entry name" value="TrpR-like"/>
    <property type="match status" value="1"/>
</dbReference>
<dbReference type="PROSITE" id="PS01008">
    <property type="entry name" value="DNAA"/>
    <property type="match status" value="1"/>
</dbReference>
<protein>
    <recommendedName>
        <fullName evidence="1">Chromosomal replication initiator protein DnaA</fullName>
    </recommendedName>
</protein>
<keyword id="KW-0067">ATP-binding</keyword>
<keyword id="KW-0963">Cytoplasm</keyword>
<keyword id="KW-0235">DNA replication</keyword>
<keyword id="KW-0238">DNA-binding</keyword>
<keyword id="KW-0446">Lipid-binding</keyword>
<keyword id="KW-0547">Nucleotide-binding</keyword>
<comment type="function">
    <text evidence="1">Plays an essential role in the initiation and regulation of chromosomal replication. ATP-DnaA binds to the origin of replication (oriC) to initiate formation of the DNA replication initiation complex once per cell cycle. Binds the DnaA box (a 9 base pair repeat at the origin) and separates the double-stranded (ds)DNA. Forms a right-handed helical filament on oriC DNA; dsDNA binds to the exterior of the filament while single-stranded (ss)DNA is stabiized in the filament's interior. The ATP-DnaA-oriC complex binds and stabilizes one strand of the AT-rich DNA unwinding element (DUE), permitting loading of DNA polymerase. After initiation quickly degrades to an ADP-DnaA complex that is not apt for DNA replication. Binds acidic phospholipids.</text>
</comment>
<comment type="subunit">
    <text evidence="1">Oligomerizes as a right-handed, spiral filament on DNA at oriC.</text>
</comment>
<comment type="subcellular location">
    <subcellularLocation>
        <location evidence="1">Cytoplasm</location>
    </subcellularLocation>
</comment>
<comment type="domain">
    <text evidence="1">Domain I is involved in oligomerization and binding regulators, domain II is flexibile and of varying length in different bacteria, domain III forms the AAA+ region, while domain IV binds dsDNA.</text>
</comment>
<comment type="similarity">
    <text evidence="1">Belongs to the DnaA family.</text>
</comment>
<sequence length="464" mass="52966">MDAVGYEVFWNETLSQIRSESTEAEFNMWFAHLFFIASFENAIEIAVPSDFFRIQFSQKYQEKLERKFLELSGHPIKLLFAVKKGTPHGNTAPPKHVHTYLEKNSPAEVPSKKSFHPDLNRDYTFENFVSGEETKFSHSAAISVSKNPGTSYNPLLIYGGVGLGKTHLMQAIGHEIYKTTDLNVIYVTAENFGNEFISTLLNKKTQDFKKKYRYTADVLLIDDIHFFENKDGLQEELFYTFNELFEKKKQIIFTCDRPVQELKNLSSRLRSRCSRGLSTDLNMPCFETRCAILIKKIQNYNSTYPHKAIHISDDVVRLVSENISSNIRDLEGALTKIIAFIEVSGSITIDIVPSLLKEFFLSARPKHITVETILHVVADHFNISYSDLKGKKRNKSVVYPRQIAMFLSKELTELSTTELGIEFGGRDHSTVIYGCQKIEGEILTNPSLQANLDLLKSKVQDSIR</sequence>
<reference key="1">
    <citation type="journal article" date="2008" name="BMC Microbiol.">
        <title>Complete genome sequence of Treponema pallidum ssp. pallidum strain SS14 determined with oligonucleotide arrays.</title>
        <authorList>
            <person name="Matejkova P."/>
            <person name="Strouhal M."/>
            <person name="Smajs D."/>
            <person name="Norris S.J."/>
            <person name="Palzkill T."/>
            <person name="Petrosino J.F."/>
            <person name="Sodergren E."/>
            <person name="Norton J.E."/>
            <person name="Singh J."/>
            <person name="Richmond T.A."/>
            <person name="Molla M.N."/>
            <person name="Albert T.J."/>
            <person name="Weinstock G.M."/>
        </authorList>
    </citation>
    <scope>NUCLEOTIDE SEQUENCE [LARGE SCALE GENOMIC DNA]</scope>
    <source>
        <strain>SS14</strain>
    </source>
</reference>
<gene>
    <name evidence="1" type="primary">dnaA</name>
    <name type="ordered locus">TPASS_0001</name>
</gene>
<feature type="chain" id="PRO_1000122032" description="Chromosomal replication initiator protein DnaA">
    <location>
        <begin position="1"/>
        <end position="464"/>
    </location>
</feature>
<feature type="region of interest" description="Domain I, interacts with DnaA modulators" evidence="1">
    <location>
        <begin position="1"/>
        <end position="74"/>
    </location>
</feature>
<feature type="region of interest" description="Domain II" evidence="1">
    <location>
        <begin position="74"/>
        <end position="117"/>
    </location>
</feature>
<feature type="region of interest" description="Domain III, AAA+ region" evidence="1">
    <location>
        <begin position="118"/>
        <end position="341"/>
    </location>
</feature>
<feature type="region of interest" description="Domain IV, binds dsDNA" evidence="1">
    <location>
        <begin position="342"/>
        <end position="464"/>
    </location>
</feature>
<feature type="binding site" evidence="1">
    <location>
        <position position="162"/>
    </location>
    <ligand>
        <name>ATP</name>
        <dbReference type="ChEBI" id="CHEBI:30616"/>
    </ligand>
</feature>
<feature type="binding site" evidence="1">
    <location>
        <position position="164"/>
    </location>
    <ligand>
        <name>ATP</name>
        <dbReference type="ChEBI" id="CHEBI:30616"/>
    </ligand>
</feature>
<feature type="binding site" evidence="1">
    <location>
        <position position="165"/>
    </location>
    <ligand>
        <name>ATP</name>
        <dbReference type="ChEBI" id="CHEBI:30616"/>
    </ligand>
</feature>
<feature type="binding site" evidence="1">
    <location>
        <position position="166"/>
    </location>
    <ligand>
        <name>ATP</name>
        <dbReference type="ChEBI" id="CHEBI:30616"/>
    </ligand>
</feature>
<evidence type="ECO:0000255" key="1">
    <source>
        <dbReference type="HAMAP-Rule" id="MF_00377"/>
    </source>
</evidence>
<name>DNAA_TREPS</name>
<accession>B2S1V1</accession>
<organism>
    <name type="scientific">Treponema pallidum subsp. pallidum (strain SS14)</name>
    <dbReference type="NCBI Taxonomy" id="455434"/>
    <lineage>
        <taxon>Bacteria</taxon>
        <taxon>Pseudomonadati</taxon>
        <taxon>Spirochaetota</taxon>
        <taxon>Spirochaetia</taxon>
        <taxon>Spirochaetales</taxon>
        <taxon>Treponemataceae</taxon>
        <taxon>Treponema</taxon>
    </lineage>
</organism>